<name>ETFD_HUMAN</name>
<protein>
    <recommendedName>
        <fullName evidence="17">Electron transfer flavoprotein-ubiquinone oxidoreductase, mitochondrial</fullName>
        <shortName>ETF-QO</shortName>
        <shortName>ETF-ubiquinone oxidoreductase</shortName>
        <ecNumber evidence="5">1.5.5.1</ecNumber>
    </recommendedName>
    <alternativeName>
        <fullName>Electron-transferring-flavoprotein dehydrogenase</fullName>
        <shortName>ETF dehydrogenase</shortName>
    </alternativeName>
</protein>
<feature type="transit peptide" description="Mitochondrion" evidence="3">
    <location>
        <begin position="1"/>
        <end position="33"/>
    </location>
</feature>
<feature type="chain" id="PRO_0000008661" description="Electron transfer flavoprotein-ubiquinone oxidoreductase, mitochondrial">
    <location>
        <begin position="34"/>
        <end position="617"/>
    </location>
</feature>
<feature type="intramembrane region" evidence="1">
    <location>
        <begin position="109"/>
        <end position="130"/>
    </location>
</feature>
<feature type="intramembrane region" evidence="1">
    <location>
        <begin position="428"/>
        <end position="447"/>
    </location>
</feature>
<feature type="domain" description="4Fe-4S ferredoxin-type" evidence="4">
    <location>
        <begin position="577"/>
        <end position="606"/>
    </location>
</feature>
<feature type="binding site" evidence="3">
    <location>
        <begin position="71"/>
        <end position="85"/>
    </location>
    <ligand>
        <name>FAD</name>
        <dbReference type="ChEBI" id="CHEBI:57692"/>
    </ligand>
</feature>
<feature type="binding site" evidence="1">
    <location>
        <position position="305"/>
    </location>
    <ligand>
        <name>a ubiquinone</name>
        <dbReference type="ChEBI" id="CHEBI:16389"/>
    </ligand>
</feature>
<feature type="binding site" evidence="1">
    <location>
        <position position="306"/>
    </location>
    <ligand>
        <name>a ubiquinone</name>
        <dbReference type="ChEBI" id="CHEBI:16389"/>
    </ligand>
</feature>
<feature type="binding site" evidence="3">
    <location>
        <position position="561"/>
    </location>
    <ligand>
        <name>[4Fe-4S] cluster</name>
        <dbReference type="ChEBI" id="CHEBI:49883"/>
    </ligand>
</feature>
<feature type="binding site" evidence="3">
    <location>
        <position position="586"/>
    </location>
    <ligand>
        <name>[4Fe-4S] cluster</name>
        <dbReference type="ChEBI" id="CHEBI:49883"/>
    </ligand>
</feature>
<feature type="binding site" evidence="3">
    <location>
        <position position="589"/>
    </location>
    <ligand>
        <name>[4Fe-4S] cluster</name>
        <dbReference type="ChEBI" id="CHEBI:49883"/>
    </ligand>
</feature>
<feature type="binding site" evidence="3">
    <location>
        <position position="592"/>
    </location>
    <ligand>
        <name>[4Fe-4S] cluster</name>
        <dbReference type="ChEBI" id="CHEBI:49883"/>
    </ligand>
</feature>
<feature type="modified residue" description="N6-acetyllysine" evidence="2">
    <location>
        <position position="96"/>
    </location>
</feature>
<feature type="modified residue" description="N6-acetyllysine" evidence="2">
    <location>
        <position position="132"/>
    </location>
</feature>
<feature type="modified residue" description="N6-acetyllysine" evidence="2">
    <location>
        <position position="223"/>
    </location>
</feature>
<feature type="modified residue" description="N6-acetyllysine" evidence="2">
    <location>
        <position position="357"/>
    </location>
</feature>
<feature type="modified residue" description="Phosphoserine" evidence="20">
    <location>
        <position position="551"/>
    </location>
</feature>
<feature type="splice variant" id="VSP_055158" description="In isoform 2." evidence="16">
    <location>
        <begin position="12"/>
        <end position="58"/>
    </location>
</feature>
<feature type="sequence variant" id="VAR_075438" evidence="6">
    <original>F</original>
    <variation>C</variation>
    <location>
        <position position="16"/>
    </location>
</feature>
<feature type="sequence variant" id="VAR_062966" description="In dbSNP:rs11559290." evidence="6 8 12 15">
    <original>T</original>
    <variation>I</variation>
    <location>
        <position position="31"/>
    </location>
</feature>
<feature type="sequence variant" id="VAR_075439" description="In GA2C; uncertain significance." evidence="6">
    <original>Y</original>
    <variation>C</variation>
    <location>
        <position position="49"/>
    </location>
</feature>
<feature type="sequence variant" id="VAR_075440" description="In GA2C; dbSNP:rs887871605." evidence="6">
    <original>S</original>
    <variation>F</variation>
    <location>
        <position position="82"/>
    </location>
</feature>
<feature type="sequence variant" id="VAR_075441" description="In GA2C." evidence="6">
    <original>S</original>
    <variation>P</variation>
    <location>
        <position position="82"/>
    </location>
</feature>
<feature type="sequence variant" id="VAR_075442" description="In GA2C; dbSNP:rs121964954." evidence="13 14">
    <original>A</original>
    <variation>T</variation>
    <location>
        <position position="84"/>
    </location>
</feature>
<feature type="sequence variant" id="VAR_055711" description="In dbSNP:rs1140065.">
    <original>H</original>
    <variation>R</variation>
    <location>
        <position position="94"/>
    </location>
</feature>
<feature type="sequence variant" id="VAR_075443" description="In GA2C." evidence="9">
    <original>H</original>
    <variation>Y</variation>
    <location>
        <position position="112"/>
    </location>
</feature>
<feature type="sequence variant" id="VAR_075444" description="In GA2C; dbSNP:rs121964956." evidence="13">
    <original>L</original>
    <variation>H</variation>
    <location>
        <position position="127"/>
    </location>
</feature>
<feature type="sequence variant" id="VAR_075445" description="In GA2C; uncertain significance; dbSNP:rs779896449." evidence="6">
    <original>L</original>
    <variation>R</variation>
    <location>
        <position position="138"/>
    </location>
</feature>
<feature type="sequence variant" id="VAR_075446" description="In GA2C; dbSNP:rs121964955." evidence="14">
    <original>R</original>
    <variation>H</variation>
    <location>
        <position position="175"/>
    </location>
</feature>
<feature type="sequence variant" id="VAR_075447" description="In GA2C; dbSNP:rs121964955." evidence="13">
    <original>R</original>
    <variation>L</variation>
    <location>
        <position position="175"/>
    </location>
</feature>
<feature type="sequence variant" id="VAR_075448" description="In GA2C; uncertain significance; dbSNP:rs748289922." evidence="6">
    <original>D</original>
    <variation>N</variation>
    <location>
        <position position="218"/>
    </location>
</feature>
<feature type="sequence variant" id="VAR_075449" description="In GA2C; uncertain significance; dbSNP:rs1482632936." evidence="6">
    <original>Q</original>
    <variation>P</variation>
    <location>
        <position position="222"/>
    </location>
</feature>
<feature type="sequence variant" id="VAR_075450" description="In GA2C; uncertain significance; dbSNP:rs1450977775." evidence="6">
    <original>L</original>
    <variation>F</variation>
    <location>
        <position position="262"/>
    </location>
</feature>
<feature type="sequence variant" id="VAR_075451" description="In GA2C; uncertain significance; dbSNP:rs377686388." evidence="6">
    <original>L</original>
    <variation>P</variation>
    <location>
        <position position="334"/>
    </location>
</feature>
<feature type="sequence variant" id="VAR_075452" description="In GA2C; uncertain significance; dbSNP:rs1358691961." evidence="6">
    <original>H</original>
    <variation>R</variation>
    <location>
        <position position="346"/>
    </location>
</feature>
<feature type="sequence variant" id="VAR_075453" description="In GA2C; uncertain significance; dbSNP:rs387907170." evidence="11">
    <original>L</original>
    <variation>P</variation>
    <location>
        <position position="377"/>
    </location>
</feature>
<feature type="sequence variant" id="VAR_075454" description="In GA2C; uncertain significance." evidence="6">
    <original>R</original>
    <variation>K</variation>
    <location>
        <position position="452"/>
    </location>
</feature>
<feature type="sequence variant" id="VAR_075455" description="In GA2C; dbSNP:rs398124152." evidence="6 11">
    <original>P</original>
    <variation>L</variation>
    <location>
        <position position="456"/>
    </location>
</feature>
<feature type="sequence variant" id="VAR_075456" description="In GA2C." evidence="9">
    <original>P</original>
    <variation>T</variation>
    <location>
        <position position="456"/>
    </location>
</feature>
<feature type="sequence variant" id="VAR_075457" description="In GA2C; uncertain significance; dbSNP:rs377656387." evidence="11">
    <original>P</original>
    <variation>L</variation>
    <location>
        <position position="483"/>
    </location>
</feature>
<feature type="sequence variant" id="VAR_075458" description="In GA2C; dbSNP:rs993314323." evidence="6">
    <original>P</original>
    <variation>L</variation>
    <location>
        <position position="562"/>
    </location>
</feature>
<feature type="sequence variant" id="VAR_036134" description="In a colorectal cancer sample; somatic mutation; dbSNP:rs769893690." evidence="10">
    <original>V</original>
    <variation>L</variation>
    <location>
        <position position="565"/>
    </location>
</feature>
<feature type="sequence variant" id="VAR_075459" description="In GA2C." evidence="11">
    <original>K</original>
    <variation>E</variation>
    <location>
        <position position="590"/>
    </location>
</feature>
<feature type="sequence variant" id="VAR_075460" description="In GA2C; dbSNP:rs761669036." evidence="6">
    <original>G</original>
    <variation>E</variation>
    <location>
        <position position="611"/>
    </location>
</feature>
<feature type="sequence conflict" description="In Ref. 3; CAD98030." evidence="17" ref="3">
    <original>I</original>
    <variation>V</variation>
    <location>
        <position position="109"/>
    </location>
</feature>
<feature type="sequence conflict" description="In Ref. 2; BAG65581." evidence="17" ref="2">
    <original>P</original>
    <variation>S</variation>
    <location>
        <position position="456"/>
    </location>
</feature>
<evidence type="ECO:0000250" key="1"/>
<evidence type="ECO:0000250" key="2">
    <source>
        <dbReference type="UniProtKB" id="Q921G7"/>
    </source>
</evidence>
<evidence type="ECO:0000255" key="3"/>
<evidence type="ECO:0000255" key="4">
    <source>
        <dbReference type="PROSITE-ProRule" id="PRU00711"/>
    </source>
</evidence>
<evidence type="ECO:0000269" key="5">
    <source>
    </source>
</evidence>
<evidence type="ECO:0000269" key="6">
    <source>
    </source>
</evidence>
<evidence type="ECO:0000269" key="7">
    <source>
    </source>
</evidence>
<evidence type="ECO:0000269" key="8">
    <source>
    </source>
</evidence>
<evidence type="ECO:0000269" key="9">
    <source>
    </source>
</evidence>
<evidence type="ECO:0000269" key="10">
    <source>
    </source>
</evidence>
<evidence type="ECO:0000269" key="11">
    <source>
    </source>
</evidence>
<evidence type="ECO:0000269" key="12">
    <source>
    </source>
</evidence>
<evidence type="ECO:0000269" key="13">
    <source>
    </source>
</evidence>
<evidence type="ECO:0000269" key="14">
    <source>
    </source>
</evidence>
<evidence type="ECO:0000269" key="15">
    <source>
    </source>
</evidence>
<evidence type="ECO:0000303" key="16">
    <source>
    </source>
</evidence>
<evidence type="ECO:0000305" key="17"/>
<evidence type="ECO:0000305" key="18">
    <source>
    </source>
</evidence>
<evidence type="ECO:0000312" key="19">
    <source>
        <dbReference type="HGNC" id="HGNC:3483"/>
    </source>
</evidence>
<evidence type="ECO:0007744" key="20">
    <source>
    </source>
</evidence>
<sequence length="617" mass="68495">MLVPLAKLSCLAYQCFHALKIKKNYLPLCATRWSSTSTVPRITTHYTIYPRDKDKRWEGVNMERFAEEADVVIVGAGPAGLSAAVRLKQLAVAHEKDIRVCLVEKAAQIGAHTLSGACLDPGAFKELFPDWKEKGAPLNTPVTEDRFGILTEKYRIPVPILPGLPMNNHGNYIVRLGHLVSWMGEQAEALGVEVYPGYAAAEVLFHDDGSVKGIATNDVGIQKDGAPKATFERGLELHAKVTIFAEGCHGHLAKQLYKKFDLRANCEPQTYGIGLKELWVIDEKNWKPGRVDHTVGWPLDRHTYGGSFLYHLNEGEPLVALGLVVGLDYQNPYLSPFREFQRWKHHPSIRPTLEGGKRIAYGARALNEGGFQSIPKLTFPGGLLIGCSPGFMNVPKIKGTHTAMKSGILAAESIFNQLTSENLQSKTIGLHVTEYEDNLKNSWVWKELYSVRNIRPSCHGVLGVYGGMIYTGIFYWILRGMEPWTLKHKGSDFERLKPAKDCTPIEYPKPDGQISFDLLSSVALSGTNHEHDQPAHLTLRDDSIPVNRNLSIYDGPEQRFCPAGVYEFVPVEQGDGFRLQINAQNCVHCKTCDIKDPSQNINWVVPEGGGGPAYNGM</sequence>
<reference key="1">
    <citation type="journal article" date="1994" name="Eur. J. Biochem.">
        <title>Molecular cloning and expression of a cDNA encoding human electron transfer flavoprotein-ubiquinone oxidoreductase.</title>
        <authorList>
            <person name="Goodman S.I."/>
            <person name="Axtell K.M."/>
            <person name="Bindoff L.A."/>
            <person name="Beard S.E."/>
            <person name="Gill R.E."/>
            <person name="Frerman F.E."/>
        </authorList>
    </citation>
    <scope>NUCLEOTIDE SEQUENCE [MRNA] (ISOFORM 1)</scope>
    <scope>FUNCTION</scope>
    <scope>CATALYTIC ACTIVITY</scope>
    <scope>VARIANT ILE-31</scope>
    <source>
        <tissue>Fetal liver</tissue>
    </source>
</reference>
<reference key="2">
    <citation type="journal article" date="2004" name="Nat. Genet.">
        <title>Complete sequencing and characterization of 21,243 full-length human cDNAs.</title>
        <authorList>
            <person name="Ota T."/>
            <person name="Suzuki Y."/>
            <person name="Nishikawa T."/>
            <person name="Otsuki T."/>
            <person name="Sugiyama T."/>
            <person name="Irie R."/>
            <person name="Wakamatsu A."/>
            <person name="Hayashi K."/>
            <person name="Sato H."/>
            <person name="Nagai K."/>
            <person name="Kimura K."/>
            <person name="Makita H."/>
            <person name="Sekine M."/>
            <person name="Obayashi M."/>
            <person name="Nishi T."/>
            <person name="Shibahara T."/>
            <person name="Tanaka T."/>
            <person name="Ishii S."/>
            <person name="Yamamoto J."/>
            <person name="Saito K."/>
            <person name="Kawai Y."/>
            <person name="Isono Y."/>
            <person name="Nakamura Y."/>
            <person name="Nagahari K."/>
            <person name="Murakami K."/>
            <person name="Yasuda T."/>
            <person name="Iwayanagi T."/>
            <person name="Wagatsuma M."/>
            <person name="Shiratori A."/>
            <person name="Sudo H."/>
            <person name="Hosoiri T."/>
            <person name="Kaku Y."/>
            <person name="Kodaira H."/>
            <person name="Kondo H."/>
            <person name="Sugawara M."/>
            <person name="Takahashi M."/>
            <person name="Kanda K."/>
            <person name="Yokoi T."/>
            <person name="Furuya T."/>
            <person name="Kikkawa E."/>
            <person name="Omura Y."/>
            <person name="Abe K."/>
            <person name="Kamihara K."/>
            <person name="Katsuta N."/>
            <person name="Sato K."/>
            <person name="Tanikawa M."/>
            <person name="Yamazaki M."/>
            <person name="Ninomiya K."/>
            <person name="Ishibashi T."/>
            <person name="Yamashita H."/>
            <person name="Murakawa K."/>
            <person name="Fujimori K."/>
            <person name="Tanai H."/>
            <person name="Kimata M."/>
            <person name="Watanabe M."/>
            <person name="Hiraoka S."/>
            <person name="Chiba Y."/>
            <person name="Ishida S."/>
            <person name="Ono Y."/>
            <person name="Takiguchi S."/>
            <person name="Watanabe S."/>
            <person name="Yosida M."/>
            <person name="Hotuta T."/>
            <person name="Kusano J."/>
            <person name="Kanehori K."/>
            <person name="Takahashi-Fujii A."/>
            <person name="Hara H."/>
            <person name="Tanase T.-O."/>
            <person name="Nomura Y."/>
            <person name="Togiya S."/>
            <person name="Komai F."/>
            <person name="Hara R."/>
            <person name="Takeuchi K."/>
            <person name="Arita M."/>
            <person name="Imose N."/>
            <person name="Musashino K."/>
            <person name="Yuuki H."/>
            <person name="Oshima A."/>
            <person name="Sasaki N."/>
            <person name="Aotsuka S."/>
            <person name="Yoshikawa Y."/>
            <person name="Matsunawa H."/>
            <person name="Ichihara T."/>
            <person name="Shiohata N."/>
            <person name="Sano S."/>
            <person name="Moriya S."/>
            <person name="Momiyama H."/>
            <person name="Satoh N."/>
            <person name="Takami S."/>
            <person name="Terashima Y."/>
            <person name="Suzuki O."/>
            <person name="Nakagawa S."/>
            <person name="Senoh A."/>
            <person name="Mizoguchi H."/>
            <person name="Goto Y."/>
            <person name="Shimizu F."/>
            <person name="Wakebe H."/>
            <person name="Hishigaki H."/>
            <person name="Watanabe T."/>
            <person name="Sugiyama A."/>
            <person name="Takemoto M."/>
            <person name="Kawakami B."/>
            <person name="Yamazaki M."/>
            <person name="Watanabe K."/>
            <person name="Kumagai A."/>
            <person name="Itakura S."/>
            <person name="Fukuzumi Y."/>
            <person name="Fujimori Y."/>
            <person name="Komiyama M."/>
            <person name="Tashiro H."/>
            <person name="Tanigami A."/>
            <person name="Fujiwara T."/>
            <person name="Ono T."/>
            <person name="Yamada K."/>
            <person name="Fujii Y."/>
            <person name="Ozaki K."/>
            <person name="Hirao M."/>
            <person name="Ohmori Y."/>
            <person name="Kawabata A."/>
            <person name="Hikiji T."/>
            <person name="Kobatake N."/>
            <person name="Inagaki H."/>
            <person name="Ikema Y."/>
            <person name="Okamoto S."/>
            <person name="Okitani R."/>
            <person name="Kawakami T."/>
            <person name="Noguchi S."/>
            <person name="Itoh T."/>
            <person name="Shigeta K."/>
            <person name="Senba T."/>
            <person name="Matsumura K."/>
            <person name="Nakajima Y."/>
            <person name="Mizuno T."/>
            <person name="Morinaga M."/>
            <person name="Sasaki M."/>
            <person name="Togashi T."/>
            <person name="Oyama M."/>
            <person name="Hata H."/>
            <person name="Watanabe M."/>
            <person name="Komatsu T."/>
            <person name="Mizushima-Sugano J."/>
            <person name="Satoh T."/>
            <person name="Shirai Y."/>
            <person name="Takahashi Y."/>
            <person name="Nakagawa K."/>
            <person name="Okumura K."/>
            <person name="Nagase T."/>
            <person name="Nomura N."/>
            <person name="Kikuchi H."/>
            <person name="Masuho Y."/>
            <person name="Yamashita R."/>
            <person name="Nakai K."/>
            <person name="Yada T."/>
            <person name="Nakamura Y."/>
            <person name="Ohara O."/>
            <person name="Isogai T."/>
            <person name="Sugano S."/>
        </authorList>
    </citation>
    <scope>NUCLEOTIDE SEQUENCE [LARGE SCALE MRNA] (ISOFORM 2)</scope>
    <source>
        <tissue>Uterus</tissue>
    </source>
</reference>
<reference key="3">
    <citation type="journal article" date="2007" name="BMC Genomics">
        <title>The full-ORF clone resource of the German cDNA consortium.</title>
        <authorList>
            <person name="Bechtel S."/>
            <person name="Rosenfelder H."/>
            <person name="Duda A."/>
            <person name="Schmidt C.P."/>
            <person name="Ernst U."/>
            <person name="Wellenreuther R."/>
            <person name="Mehrle A."/>
            <person name="Schuster C."/>
            <person name="Bahr A."/>
            <person name="Bloecker H."/>
            <person name="Heubner D."/>
            <person name="Hoerlein A."/>
            <person name="Michel G."/>
            <person name="Wedler H."/>
            <person name="Koehrer K."/>
            <person name="Ottenwaelder B."/>
            <person name="Poustka A."/>
            <person name="Wiemann S."/>
            <person name="Schupp I."/>
        </authorList>
    </citation>
    <scope>NUCLEOTIDE SEQUENCE [LARGE SCALE MRNA] (ISOFORM 1)</scope>
    <scope>VARIANT ILE-31</scope>
    <source>
        <tissue>Small intestine</tissue>
    </source>
</reference>
<reference key="4">
    <citation type="journal article" date="2005" name="Nature">
        <title>Generation and annotation of the DNA sequences of human chromosomes 2 and 4.</title>
        <authorList>
            <person name="Hillier L.W."/>
            <person name="Graves T.A."/>
            <person name="Fulton R.S."/>
            <person name="Fulton L.A."/>
            <person name="Pepin K.H."/>
            <person name="Minx P."/>
            <person name="Wagner-McPherson C."/>
            <person name="Layman D."/>
            <person name="Wylie K."/>
            <person name="Sekhon M."/>
            <person name="Becker M.C."/>
            <person name="Fewell G.A."/>
            <person name="Delehaunty K.D."/>
            <person name="Miner T.L."/>
            <person name="Nash W.E."/>
            <person name="Kremitzki C."/>
            <person name="Oddy L."/>
            <person name="Du H."/>
            <person name="Sun H."/>
            <person name="Bradshaw-Cordum H."/>
            <person name="Ali J."/>
            <person name="Carter J."/>
            <person name="Cordes M."/>
            <person name="Harris A."/>
            <person name="Isak A."/>
            <person name="van Brunt A."/>
            <person name="Nguyen C."/>
            <person name="Du F."/>
            <person name="Courtney L."/>
            <person name="Kalicki J."/>
            <person name="Ozersky P."/>
            <person name="Abbott S."/>
            <person name="Armstrong J."/>
            <person name="Belter E.A."/>
            <person name="Caruso L."/>
            <person name="Cedroni M."/>
            <person name="Cotton M."/>
            <person name="Davidson T."/>
            <person name="Desai A."/>
            <person name="Elliott G."/>
            <person name="Erb T."/>
            <person name="Fronick C."/>
            <person name="Gaige T."/>
            <person name="Haakenson W."/>
            <person name="Haglund K."/>
            <person name="Holmes A."/>
            <person name="Harkins R."/>
            <person name="Kim K."/>
            <person name="Kruchowski S.S."/>
            <person name="Strong C.M."/>
            <person name="Grewal N."/>
            <person name="Goyea E."/>
            <person name="Hou S."/>
            <person name="Levy A."/>
            <person name="Martinka S."/>
            <person name="Mead K."/>
            <person name="McLellan M.D."/>
            <person name="Meyer R."/>
            <person name="Randall-Maher J."/>
            <person name="Tomlinson C."/>
            <person name="Dauphin-Kohlberg S."/>
            <person name="Kozlowicz-Reilly A."/>
            <person name="Shah N."/>
            <person name="Swearengen-Shahid S."/>
            <person name="Snider J."/>
            <person name="Strong J.T."/>
            <person name="Thompson J."/>
            <person name="Yoakum M."/>
            <person name="Leonard S."/>
            <person name="Pearman C."/>
            <person name="Trani L."/>
            <person name="Radionenko M."/>
            <person name="Waligorski J.E."/>
            <person name="Wang C."/>
            <person name="Rock S.M."/>
            <person name="Tin-Wollam A.-M."/>
            <person name="Maupin R."/>
            <person name="Latreille P."/>
            <person name="Wendl M.C."/>
            <person name="Yang S.-P."/>
            <person name="Pohl C."/>
            <person name="Wallis J.W."/>
            <person name="Spieth J."/>
            <person name="Bieri T.A."/>
            <person name="Berkowicz N."/>
            <person name="Nelson J.O."/>
            <person name="Osborne J."/>
            <person name="Ding L."/>
            <person name="Meyer R."/>
            <person name="Sabo A."/>
            <person name="Shotland Y."/>
            <person name="Sinha P."/>
            <person name="Wohldmann P.E."/>
            <person name="Cook L.L."/>
            <person name="Hickenbotham M.T."/>
            <person name="Eldred J."/>
            <person name="Williams D."/>
            <person name="Jones T.A."/>
            <person name="She X."/>
            <person name="Ciccarelli F.D."/>
            <person name="Izaurralde E."/>
            <person name="Taylor J."/>
            <person name="Schmutz J."/>
            <person name="Myers R.M."/>
            <person name="Cox D.R."/>
            <person name="Huang X."/>
            <person name="McPherson J.D."/>
            <person name="Mardis E.R."/>
            <person name="Clifton S.W."/>
            <person name="Warren W.C."/>
            <person name="Chinwalla A.T."/>
            <person name="Eddy S.R."/>
            <person name="Marra M.A."/>
            <person name="Ovcharenko I."/>
            <person name="Furey T.S."/>
            <person name="Miller W."/>
            <person name="Eichler E.E."/>
            <person name="Bork P."/>
            <person name="Suyama M."/>
            <person name="Torrents D."/>
            <person name="Waterston R.H."/>
            <person name="Wilson R.K."/>
        </authorList>
    </citation>
    <scope>NUCLEOTIDE SEQUENCE [LARGE SCALE GENOMIC DNA]</scope>
</reference>
<reference key="5">
    <citation type="journal article" date="2004" name="Genome Res.">
        <title>The status, quality, and expansion of the NIH full-length cDNA project: the Mammalian Gene Collection (MGC).</title>
        <authorList>
            <consortium name="The MGC Project Team"/>
        </authorList>
    </citation>
    <scope>NUCLEOTIDE SEQUENCE [LARGE SCALE MRNA] (ISOFORM 1)</scope>
    <scope>VARIANT ILE-31</scope>
    <source>
        <tissue>Lung</tissue>
    </source>
</reference>
<reference key="6">
    <citation type="journal article" date="2002" name="Biochem. J.">
        <title>Expression of human electron transfer flavoprotein-ubiquinone oxidoreductase from a baculovirus vector: kinetic and spectral characterization of the human protein.</title>
        <authorList>
            <person name="Simkovic M."/>
            <person name="Degala G.D."/>
            <person name="Eaton S.S."/>
            <person name="Frerman F.E."/>
        </authorList>
    </citation>
    <scope>FUNCTION</scope>
    <scope>CATALYTIC ACTIVITY</scope>
    <scope>BIOPHYSICOCHEMICAL PROPERTIES</scope>
    <scope>SUBUNIT</scope>
</reference>
<reference key="7">
    <citation type="journal article" date="2003" name="Hum. Mutat.">
        <title>Clear relationship between ETF/ETFDH genotype and phenotype in patients with multiple acyl-CoA dehydrogenation deficiency.</title>
        <authorList>
            <person name="Olsen R.K.J."/>
            <person name="Andresen B.S."/>
            <person name="Christensen E."/>
            <person name="Bross P."/>
            <person name="Skovby F."/>
            <person name="Gregersen N."/>
        </authorList>
    </citation>
    <scope>INVOLVEMENT IN GA2C</scope>
</reference>
<reference key="8">
    <citation type="journal article" date="2011" name="BMC Syst. Biol.">
        <title>Initial characterization of the human central proteome.</title>
        <authorList>
            <person name="Burkard T.R."/>
            <person name="Planyavsky M."/>
            <person name="Kaupe I."/>
            <person name="Breitwieser F.P."/>
            <person name="Buerckstuemmer T."/>
            <person name="Bennett K.L."/>
            <person name="Superti-Furga G."/>
            <person name="Colinge J."/>
        </authorList>
    </citation>
    <scope>IDENTIFICATION BY MASS SPECTROMETRY [LARGE SCALE ANALYSIS]</scope>
</reference>
<reference key="9">
    <citation type="journal article" date="2014" name="J. Proteomics">
        <title>An enzyme assisted RP-RPLC approach for in-depth analysis of human liver phosphoproteome.</title>
        <authorList>
            <person name="Bian Y."/>
            <person name="Song C."/>
            <person name="Cheng K."/>
            <person name="Dong M."/>
            <person name="Wang F."/>
            <person name="Huang J."/>
            <person name="Sun D."/>
            <person name="Wang L."/>
            <person name="Ye M."/>
            <person name="Zou H."/>
        </authorList>
    </citation>
    <scope>PHOSPHORYLATION [LARGE SCALE ANALYSIS] AT SER-551</scope>
    <scope>IDENTIFICATION BY MASS SPECTROMETRY [LARGE SCALE ANALYSIS]</scope>
    <source>
        <tissue>Liver</tissue>
    </source>
</reference>
<reference key="10">
    <citation type="journal article" date="2015" name="Proteomics">
        <title>N-terminome analysis of the human mitochondrial proteome.</title>
        <authorList>
            <person name="Vaca Jacome A.S."/>
            <person name="Rabilloud T."/>
            <person name="Schaeffer-Reiss C."/>
            <person name="Rompais M."/>
            <person name="Ayoub D."/>
            <person name="Lane L."/>
            <person name="Bairoch A."/>
            <person name="Van Dorsselaer A."/>
            <person name="Carapito C."/>
        </authorList>
    </citation>
    <scope>IDENTIFICATION BY MASS SPECTROMETRY [LARGE SCALE ANALYSIS]</scope>
</reference>
<reference key="11">
    <citation type="journal article" date="2002" name="Mol. Genet. Metab.">
        <title>Glutaric acidemia type II: gene structure and mutations of the electron transfer flavoprotein:ubiquinone oxidoreductase (ETF:QO) gene.</title>
        <authorList>
            <person name="Goodman S.I."/>
            <person name="Binard R.J."/>
            <person name="Woontner M.R."/>
            <person name="Frerman F.E."/>
        </authorList>
    </citation>
    <scope>VARIANTS GA2C CYS-49; PHE-82; PRO-82; ARG-138; ASN-218; PRO-222; PHE-262; PRO-334; ARG-346; LYS-452; LEU-456; LEU-562 AND GLU-611</scope>
    <scope>VARIANTS CYS-16 AND ILE-31</scope>
</reference>
<reference key="12">
    <citation type="journal article" date="2006" name="Neuromuscul. Disord.">
        <title>So doctor, what exactly is wrong with my muscles? Glutaric aciduria type II presenting in a teenager.</title>
        <authorList>
            <person name="Beresford M.W."/>
            <person name="Pourfarzam M."/>
            <person name="Turnbull D.M."/>
            <person name="Davidson J.E."/>
        </authorList>
    </citation>
    <scope>VARIANTS GA2C TYR-112 AND THR-456</scope>
</reference>
<reference key="13">
    <citation type="journal article" date="2006" name="Science">
        <title>The consensus coding sequences of human breast and colorectal cancers.</title>
        <authorList>
            <person name="Sjoeblom T."/>
            <person name="Jones S."/>
            <person name="Wood L.D."/>
            <person name="Parsons D.W."/>
            <person name="Lin J."/>
            <person name="Barber T.D."/>
            <person name="Mandelker D."/>
            <person name="Leary R.J."/>
            <person name="Ptak J."/>
            <person name="Silliman N."/>
            <person name="Szabo S."/>
            <person name="Buckhaults P."/>
            <person name="Farrell C."/>
            <person name="Meeh P."/>
            <person name="Markowitz S.D."/>
            <person name="Willis J."/>
            <person name="Dawson D."/>
            <person name="Willson J.K.V."/>
            <person name="Gazdar A.F."/>
            <person name="Hartigan J."/>
            <person name="Wu L."/>
            <person name="Liu C."/>
            <person name="Parmigiani G."/>
            <person name="Park B.H."/>
            <person name="Bachman K.E."/>
            <person name="Papadopoulos N."/>
            <person name="Vogelstein B."/>
            <person name="Kinzler K.W."/>
            <person name="Velculescu V.E."/>
        </authorList>
    </citation>
    <scope>VARIANT [LARGE SCALE ANALYSIS] LEU-565</scope>
</reference>
<reference key="14">
    <citation type="journal article" date="2007" name="Brain">
        <title>The myopathic form of coenzyme Q10 deficiency is caused by mutations in the electron-transferring-flavoprotein dehydrogenase (ETFDH) gene.</title>
        <authorList>
            <person name="Gempel K."/>
            <person name="Topaloglu H."/>
            <person name="Talim B."/>
            <person name="Schneiderat P."/>
            <person name="Schoser B.G."/>
            <person name="Hans V.H."/>
            <person name="Palmafy B."/>
            <person name="Kale G."/>
            <person name="Tokatli A."/>
            <person name="Quinzii C."/>
            <person name="Hirano M."/>
            <person name="Naini A."/>
            <person name="DiMauro S."/>
            <person name="Prokisch H."/>
            <person name="Lochmueller H."/>
            <person name="Horvath R."/>
        </authorList>
    </citation>
    <scope>VARIANTS GA2C PRO-377; LEU-456; LEU-483 AND GLU-590</scope>
</reference>
<reference key="15">
    <citation type="journal article" date="2009" name="Neuromuscul. Disord.">
        <title>ETFDH mutations, CoQ10 levels, and respiratory chain activities in patients with riboflavin-responsive multiple acyl-CoA dehydrogenase deficiency.</title>
        <authorList>
            <person name="Liang W.C."/>
            <person name="Ohkuma A."/>
            <person name="Hayashi Y.K."/>
            <person name="Lopez L.C."/>
            <person name="Hirano M."/>
            <person name="Nonaka I."/>
            <person name="Noguchi S."/>
            <person name="Chen L.H."/>
            <person name="Jong Y.J."/>
            <person name="Nishino I."/>
        </authorList>
    </citation>
    <scope>VARIANTS GA2C THR-84; HIS-127 AND LEU-175</scope>
</reference>
<reference key="16">
    <citation type="journal article" date="2010" name="Clin. Genet.">
        <title>High frequency of ETFDH c.250G&gt;A mutation in Taiwanese patients with late-onset lipid storage myopathy.</title>
        <authorList>
            <person name="Lan M.Y."/>
            <person name="Fu M.H."/>
            <person name="Liu Y.F."/>
            <person name="Huang C.C."/>
            <person name="Chang Y.Y."/>
            <person name="Liu J.S."/>
            <person name="Peng C.H."/>
            <person name="Chen S.S."/>
        </authorList>
    </citation>
    <scope>VARIANTS GA2C THR-84 AND HIS-175</scope>
</reference>
<proteinExistence type="evidence at protein level"/>
<dbReference type="EC" id="1.5.5.1" evidence="5"/>
<dbReference type="EMBL" id="S69232">
    <property type="protein sequence ID" value="AAC60628.1"/>
    <property type="molecule type" value="mRNA"/>
</dbReference>
<dbReference type="EMBL" id="AK304838">
    <property type="protein sequence ID" value="BAG65581.1"/>
    <property type="molecule type" value="mRNA"/>
</dbReference>
<dbReference type="EMBL" id="BX538129">
    <property type="protein sequence ID" value="CAD98030.1"/>
    <property type="status" value="ALT_SEQ"/>
    <property type="molecule type" value="mRNA"/>
</dbReference>
<dbReference type="EMBL" id="AC107219">
    <property type="status" value="NOT_ANNOTATED_CDS"/>
    <property type="molecule type" value="Genomic_DNA"/>
</dbReference>
<dbReference type="EMBL" id="BC011890">
    <property type="protein sequence ID" value="AAH11890.1"/>
    <property type="molecule type" value="mRNA"/>
</dbReference>
<dbReference type="CCDS" id="CCDS3800.1">
    <molecule id="Q16134-1"/>
</dbReference>
<dbReference type="CCDS" id="CCDS64090.1">
    <molecule id="Q16134-3"/>
</dbReference>
<dbReference type="PIR" id="S41115">
    <property type="entry name" value="S41115"/>
</dbReference>
<dbReference type="RefSeq" id="NP_001268666.1">
    <molecule id="Q16134-3"/>
    <property type="nucleotide sequence ID" value="NM_001281737.2"/>
</dbReference>
<dbReference type="RefSeq" id="NP_004444.2">
    <molecule id="Q16134-1"/>
    <property type="nucleotide sequence ID" value="NM_004453.4"/>
</dbReference>
<dbReference type="SMR" id="Q16134"/>
<dbReference type="BioGRID" id="108411">
    <property type="interactions" value="28"/>
</dbReference>
<dbReference type="FunCoup" id="Q16134">
    <property type="interactions" value="1423"/>
</dbReference>
<dbReference type="IntAct" id="Q16134">
    <property type="interactions" value="11"/>
</dbReference>
<dbReference type="STRING" id="9606.ENSP00000426638"/>
<dbReference type="DrugBank" id="DB04141">
    <property type="generic name" value="2-Hexyloxy-6-Hydroxymethyl-Tetrahydro-Pyran-3,4,5-Triol"/>
</dbReference>
<dbReference type="DrugBank" id="DB00331">
    <property type="generic name" value="Metformin"/>
</dbReference>
<dbReference type="GlyGen" id="Q16134">
    <property type="glycosylation" value="1 site, 1 O-linked glycan (1 site)"/>
</dbReference>
<dbReference type="iPTMnet" id="Q16134"/>
<dbReference type="PhosphoSitePlus" id="Q16134"/>
<dbReference type="SwissPalm" id="Q16134"/>
<dbReference type="BioMuta" id="ETFDH"/>
<dbReference type="DMDM" id="292495008"/>
<dbReference type="jPOST" id="Q16134"/>
<dbReference type="MassIVE" id="Q16134"/>
<dbReference type="PaxDb" id="9606-ENSP00000426638"/>
<dbReference type="PeptideAtlas" id="Q16134"/>
<dbReference type="ProteomicsDB" id="60832">
    <molecule id="Q16134-1"/>
</dbReference>
<dbReference type="Pumba" id="Q16134"/>
<dbReference type="Antibodypedia" id="45630">
    <property type="antibodies" value="279 antibodies from 31 providers"/>
</dbReference>
<dbReference type="DNASU" id="2110"/>
<dbReference type="Ensembl" id="ENST00000307738.5">
    <molecule id="Q16134-3"/>
    <property type="protein sequence ID" value="ENSP00000303552.5"/>
    <property type="gene ID" value="ENSG00000171503.13"/>
</dbReference>
<dbReference type="Ensembl" id="ENST00000511912.6">
    <molecule id="Q16134-1"/>
    <property type="protein sequence ID" value="ENSP00000426638.1"/>
    <property type="gene ID" value="ENSG00000171503.13"/>
</dbReference>
<dbReference type="GeneID" id="2110"/>
<dbReference type="KEGG" id="hsa:2110"/>
<dbReference type="MANE-Select" id="ENST00000511912.6">
    <property type="protein sequence ID" value="ENSP00000426638.1"/>
    <property type="RefSeq nucleotide sequence ID" value="NM_004453.4"/>
    <property type="RefSeq protein sequence ID" value="NP_004444.2"/>
</dbReference>
<dbReference type="UCSC" id="uc003iqb.5">
    <molecule id="Q16134-1"/>
    <property type="organism name" value="human"/>
</dbReference>
<dbReference type="AGR" id="HGNC:3483"/>
<dbReference type="CTD" id="2110"/>
<dbReference type="DisGeNET" id="2110"/>
<dbReference type="GeneCards" id="ETFDH"/>
<dbReference type="GeneReviews" id="ETFDH"/>
<dbReference type="HGNC" id="HGNC:3483">
    <property type="gene designation" value="ETFDH"/>
</dbReference>
<dbReference type="HPA" id="ENSG00000171503">
    <property type="expression patterns" value="Tissue enhanced (liver, tongue)"/>
</dbReference>
<dbReference type="MalaCards" id="ETFDH"/>
<dbReference type="MIM" id="231675">
    <property type="type" value="gene"/>
</dbReference>
<dbReference type="MIM" id="231680">
    <property type="type" value="phenotype"/>
</dbReference>
<dbReference type="neXtProt" id="NX_Q16134"/>
<dbReference type="OpenTargets" id="ENSG00000171503"/>
<dbReference type="Orphanet" id="394532">
    <property type="disease" value="Multiple acyl-CoA dehydrogenase deficiency, mild type"/>
</dbReference>
<dbReference type="Orphanet" id="394529">
    <property type="disease" value="Multiple acyl-CoA dehydrogenase deficiency, severe neonatal type"/>
</dbReference>
<dbReference type="PharmGKB" id="PA27899"/>
<dbReference type="VEuPathDB" id="HostDB:ENSG00000171503"/>
<dbReference type="eggNOG" id="KOG2415">
    <property type="taxonomic scope" value="Eukaryota"/>
</dbReference>
<dbReference type="GeneTree" id="ENSGT00390000010773"/>
<dbReference type="HOGENOM" id="CLU_009667_4_0_1"/>
<dbReference type="InParanoid" id="Q16134"/>
<dbReference type="OMA" id="INFQNCV"/>
<dbReference type="OrthoDB" id="437331at2759"/>
<dbReference type="PAN-GO" id="Q16134">
    <property type="GO annotations" value="3 GO annotations based on evolutionary models"/>
</dbReference>
<dbReference type="PhylomeDB" id="Q16134"/>
<dbReference type="TreeFam" id="TF105687"/>
<dbReference type="BioCyc" id="MetaCyc:HS10326-MONOMER"/>
<dbReference type="BRENDA" id="1.5.5.1">
    <property type="organism ID" value="2681"/>
</dbReference>
<dbReference type="PathwayCommons" id="Q16134"/>
<dbReference type="Reactome" id="R-HSA-611105">
    <property type="pathway name" value="Respiratory electron transport"/>
</dbReference>
<dbReference type="SignaLink" id="Q16134"/>
<dbReference type="BioGRID-ORCS" id="2110">
    <property type="hits" value="10 hits in 1163 CRISPR screens"/>
</dbReference>
<dbReference type="ChiTaRS" id="ETFDH">
    <property type="organism name" value="human"/>
</dbReference>
<dbReference type="GeneWiki" id="ETFDH"/>
<dbReference type="GenomeRNAi" id="2110"/>
<dbReference type="Pharos" id="Q16134">
    <property type="development level" value="Tbio"/>
</dbReference>
<dbReference type="PRO" id="PR:Q16134"/>
<dbReference type="Proteomes" id="UP000005640">
    <property type="component" value="Chromosome 4"/>
</dbReference>
<dbReference type="RNAct" id="Q16134">
    <property type="molecule type" value="protein"/>
</dbReference>
<dbReference type="Bgee" id="ENSG00000171503">
    <property type="expression patterns" value="Expressed in apex of heart and 196 other cell types or tissues"/>
</dbReference>
<dbReference type="ExpressionAtlas" id="Q16134">
    <property type="expression patterns" value="baseline and differential"/>
</dbReference>
<dbReference type="GO" id="GO:0005829">
    <property type="term" value="C:cytosol"/>
    <property type="evidence" value="ECO:0000314"/>
    <property type="project" value="HPA"/>
</dbReference>
<dbReference type="GO" id="GO:0005743">
    <property type="term" value="C:mitochondrial inner membrane"/>
    <property type="evidence" value="ECO:0000314"/>
    <property type="project" value="UniProtKB"/>
</dbReference>
<dbReference type="GO" id="GO:0031966">
    <property type="term" value="C:mitochondrial membrane"/>
    <property type="evidence" value="ECO:0000314"/>
    <property type="project" value="UniProtKB"/>
</dbReference>
<dbReference type="GO" id="GO:0005739">
    <property type="term" value="C:mitochondrion"/>
    <property type="evidence" value="ECO:0000314"/>
    <property type="project" value="HPA"/>
</dbReference>
<dbReference type="GO" id="GO:0005654">
    <property type="term" value="C:nucleoplasm"/>
    <property type="evidence" value="ECO:0000314"/>
    <property type="project" value="HPA"/>
</dbReference>
<dbReference type="GO" id="GO:0051539">
    <property type="term" value="F:4 iron, 4 sulfur cluster binding"/>
    <property type="evidence" value="ECO:0000314"/>
    <property type="project" value="UniProtKB"/>
</dbReference>
<dbReference type="GO" id="GO:0009055">
    <property type="term" value="F:electron transfer activity"/>
    <property type="evidence" value="ECO:0000314"/>
    <property type="project" value="UniProtKB"/>
</dbReference>
<dbReference type="GO" id="GO:0004174">
    <property type="term" value="F:electron-transferring-flavoprotein dehydrogenase activity"/>
    <property type="evidence" value="ECO:0000314"/>
    <property type="project" value="UniProtKB"/>
</dbReference>
<dbReference type="GO" id="GO:0050660">
    <property type="term" value="F:flavin adenine dinucleotide binding"/>
    <property type="evidence" value="ECO:0000250"/>
    <property type="project" value="UniProtKB"/>
</dbReference>
<dbReference type="GO" id="GO:0046872">
    <property type="term" value="F:metal ion binding"/>
    <property type="evidence" value="ECO:0007669"/>
    <property type="project" value="UniProtKB-KW"/>
</dbReference>
<dbReference type="GO" id="GO:0016491">
    <property type="term" value="F:oxidoreductase activity"/>
    <property type="evidence" value="ECO:0000314"/>
    <property type="project" value="UniProtKB"/>
</dbReference>
<dbReference type="GO" id="GO:0048038">
    <property type="term" value="F:quinone binding"/>
    <property type="evidence" value="ECO:0000314"/>
    <property type="project" value="UniProtKB"/>
</dbReference>
<dbReference type="GO" id="GO:0048039">
    <property type="term" value="F:ubiquinone binding"/>
    <property type="evidence" value="ECO:0000314"/>
    <property type="project" value="UniProtKB"/>
</dbReference>
<dbReference type="GO" id="GO:0022900">
    <property type="term" value="P:electron transport chain"/>
    <property type="evidence" value="ECO:0000314"/>
    <property type="project" value="UniProtKB"/>
</dbReference>
<dbReference type="GO" id="GO:0033539">
    <property type="term" value="P:fatty acid beta-oxidation using acyl-CoA dehydrogenase"/>
    <property type="evidence" value="ECO:0000315"/>
    <property type="project" value="BHF-UCL"/>
</dbReference>
<dbReference type="GO" id="GO:0022904">
    <property type="term" value="P:respiratory electron transport chain"/>
    <property type="evidence" value="ECO:0000304"/>
    <property type="project" value="Reactome"/>
</dbReference>
<dbReference type="GO" id="GO:0006979">
    <property type="term" value="P:response to oxidative stress"/>
    <property type="evidence" value="ECO:0000250"/>
    <property type="project" value="UniProtKB"/>
</dbReference>
<dbReference type="FunFam" id="3.30.70.20:FF:000088">
    <property type="entry name" value="Electron transfer flavoprotein-ubiquinone oxidoreductase, mitochondrial"/>
    <property type="match status" value="1"/>
</dbReference>
<dbReference type="Gene3D" id="3.30.70.20">
    <property type="match status" value="1"/>
</dbReference>
<dbReference type="Gene3D" id="3.30.9.90">
    <property type="match status" value="1"/>
</dbReference>
<dbReference type="Gene3D" id="3.50.50.60">
    <property type="entry name" value="FAD/NAD(P)-binding domain"/>
    <property type="match status" value="1"/>
</dbReference>
<dbReference type="InterPro" id="IPR017896">
    <property type="entry name" value="4Fe4S_Fe-S-bd"/>
</dbReference>
<dbReference type="InterPro" id="IPR040156">
    <property type="entry name" value="ETF-QO"/>
</dbReference>
<dbReference type="InterPro" id="IPR049398">
    <property type="entry name" value="ETF-QO/FixC_UQ-bd"/>
</dbReference>
<dbReference type="InterPro" id="IPR007859">
    <property type="entry name" value="ETF-QO/FixX_C"/>
</dbReference>
<dbReference type="InterPro" id="IPR036188">
    <property type="entry name" value="FAD/NAD-bd_sf"/>
</dbReference>
<dbReference type="PANTHER" id="PTHR10617">
    <property type="entry name" value="ELECTRON TRANSFER FLAVOPROTEIN-UBIQUINONE OXIDOREDUCTASE"/>
    <property type="match status" value="1"/>
</dbReference>
<dbReference type="PANTHER" id="PTHR10617:SF107">
    <property type="entry name" value="ELECTRON TRANSFER FLAVOPROTEIN-UBIQUINONE OXIDOREDUCTASE, MITOCHONDRIAL"/>
    <property type="match status" value="1"/>
</dbReference>
<dbReference type="Pfam" id="PF21162">
    <property type="entry name" value="ETFQO_UQ-bd"/>
    <property type="match status" value="1"/>
</dbReference>
<dbReference type="Pfam" id="PF05187">
    <property type="entry name" value="Fer4_ETF_QO"/>
    <property type="match status" value="1"/>
</dbReference>
<dbReference type="Pfam" id="PF01946">
    <property type="entry name" value="Thi4"/>
    <property type="match status" value="1"/>
</dbReference>
<dbReference type="PRINTS" id="PR00469">
    <property type="entry name" value="PNDRDTASEII"/>
</dbReference>
<dbReference type="SUPFAM" id="SSF54862">
    <property type="entry name" value="4Fe-4S ferredoxins"/>
    <property type="match status" value="1"/>
</dbReference>
<dbReference type="SUPFAM" id="SSF54373">
    <property type="entry name" value="FAD-linked reductases, C-terminal domain"/>
    <property type="match status" value="1"/>
</dbReference>
<dbReference type="SUPFAM" id="SSF51905">
    <property type="entry name" value="FAD/NAD(P)-binding domain"/>
    <property type="match status" value="1"/>
</dbReference>
<dbReference type="PROSITE" id="PS51379">
    <property type="entry name" value="4FE4S_FER_2"/>
    <property type="match status" value="1"/>
</dbReference>
<accession>Q16134</accession>
<accession>B4E3R9</accession>
<accession>J3KND9</accession>
<accession>Q7Z347</accession>
<gene>
    <name evidence="19" type="primary">ETFDH</name>
</gene>
<comment type="function">
    <text evidence="5">Accepts electrons from ETF and reduces ubiquinone.</text>
</comment>
<comment type="catalytic activity">
    <reaction evidence="5">
        <text>a ubiquinone + reduced [electron-transfer flavoprotein] = a ubiquinol + oxidized [electron-transfer flavoprotein] + H(+)</text>
        <dbReference type="Rhea" id="RHEA:24052"/>
        <dbReference type="Rhea" id="RHEA-COMP:9565"/>
        <dbReference type="Rhea" id="RHEA-COMP:9566"/>
        <dbReference type="Rhea" id="RHEA-COMP:10685"/>
        <dbReference type="Rhea" id="RHEA-COMP:10686"/>
        <dbReference type="ChEBI" id="CHEBI:15378"/>
        <dbReference type="ChEBI" id="CHEBI:16389"/>
        <dbReference type="ChEBI" id="CHEBI:17976"/>
        <dbReference type="ChEBI" id="CHEBI:57692"/>
        <dbReference type="ChEBI" id="CHEBI:58307"/>
        <dbReference type="EC" id="1.5.5.1"/>
    </reaction>
    <physiologicalReaction direction="left-to-right" evidence="18">
        <dbReference type="Rhea" id="RHEA:24053"/>
    </physiologicalReaction>
</comment>
<comment type="cofactor">
    <cofactor>
        <name>[4Fe-4S] cluster</name>
        <dbReference type="ChEBI" id="CHEBI:49883"/>
    </cofactor>
    <text>Binds 1 [4Fe-4S] cluster.</text>
</comment>
<comment type="cofactor">
    <cofactor>
        <name>FAD</name>
        <dbReference type="ChEBI" id="CHEBI:57692"/>
    </cofactor>
</comment>
<comment type="biophysicochemical properties">
    <kinetics>
        <KM evidence="5">8.1 uM for ubiquinone-1 (in the presence of 6 mM CHAPS)</KM>
        <KM evidence="5">4.9 uM for ubiquinone-2 (in the presence of 6 mM CHAPS)</KM>
        <KM evidence="5">14.8 uM for ubiquinone-4 (in the presence of 11 mM CHAPS)</KM>
        <KM evidence="5">8.4 uM for 6-decylubiquinone</KM>
        <KM evidence="5">0.13 uM for oxidized [electron-transfer flavoprotein]</KM>
    </kinetics>
</comment>
<comment type="subunit">
    <text evidence="5">Monomer.</text>
</comment>
<comment type="interaction">
    <interactant intactId="EBI-2870454">
        <id>Q16134</id>
    </interactant>
    <interactant intactId="EBI-19954058">
        <id>O15499</id>
        <label>GSC2</label>
    </interactant>
    <organismsDiffer>false</organismsDiffer>
    <experiments>3</experiments>
</comment>
<comment type="interaction">
    <interactant intactId="EBI-2870454">
        <id>Q16134</id>
    </interactant>
    <interactant intactId="EBI-1052037">
        <id>Q8IUC1</id>
        <label>KRTAP11-1</label>
    </interactant>
    <organismsDiffer>false</organismsDiffer>
    <experiments>3</experiments>
</comment>
<comment type="interaction">
    <interactant intactId="EBI-2870454">
        <id>Q16134</id>
    </interactant>
    <interactant intactId="EBI-11953846">
        <id>Q52LG2</id>
        <label>KRTAP13-2</label>
    </interactant>
    <organismsDiffer>false</organismsDiffer>
    <experiments>3</experiments>
</comment>
<comment type="interaction">
    <interactant intactId="EBI-2870454">
        <id>Q16134</id>
    </interactant>
    <interactant intactId="EBI-12813813">
        <id>A7E2Y1-2</id>
        <label>MYH7B</label>
    </interactant>
    <organismsDiffer>false</organismsDiffer>
    <experiments>3</experiments>
</comment>
<comment type="interaction">
    <interactant intactId="EBI-2870454">
        <id>Q16134</id>
    </interactant>
    <interactant intactId="EBI-740446">
        <id>P32242</id>
        <label>OTX1</label>
    </interactant>
    <organismsDiffer>false</organismsDiffer>
    <experiments>3</experiments>
</comment>
<comment type="interaction">
    <interactant intactId="EBI-2870454">
        <id>Q16134</id>
    </interactant>
    <interactant intactId="EBI-11525489">
        <id>Q86WT6-2</id>
        <label>TRIM69</label>
    </interactant>
    <organismsDiffer>false</organismsDiffer>
    <experiments>3</experiments>
</comment>
<comment type="interaction">
    <interactant intactId="EBI-2870454">
        <id>Q16134</id>
    </interactant>
    <interactant intactId="EBI-745520">
        <id>Q9P0T4</id>
        <label>ZNF581</label>
    </interactant>
    <organismsDiffer>false</organismsDiffer>
    <experiments>3</experiments>
</comment>
<comment type="subcellular location">
    <subcellularLocation>
        <location>Mitochondrion inner membrane</location>
    </subcellularLocation>
</comment>
<comment type="alternative products">
    <event type="alternative splicing"/>
    <isoform>
        <id>Q16134-1</id>
        <name>1</name>
        <sequence type="displayed"/>
    </isoform>
    <isoform>
        <id>Q16134-3</id>
        <name>2</name>
        <sequence type="described" ref="VSP_055158"/>
    </isoform>
</comment>
<comment type="disease" evidence="6 7 9 11 13 14">
    <disease id="DI-00515">
        <name>Glutaric aciduria 2C</name>
        <acronym>GA2C</acronym>
        <description>An autosomal recessively inherited disorder of fatty acid, amino acid, and choline metabolism. It is characterized by multiple acyl-CoA dehydrogenase deficiencies resulting in large excretion not only of glutaric acid, but also of lactic, ethylmalonic, butyric, isobutyric, 2-methyl-butyric, and isovaleric acids.</description>
        <dbReference type="MIM" id="231680"/>
    </disease>
    <text>The disease is caused by variants affecting the gene represented in this entry.</text>
</comment>
<comment type="similarity">
    <text evidence="17">Belongs to the ETF-QO/FixC family.</text>
</comment>
<comment type="sequence caution" evidence="17">
    <conflict type="miscellaneous discrepancy">
        <sequence resource="EMBL-CDS" id="CAD98030"/>
    </conflict>
    <text>Aberrant splicing.</text>
</comment>
<keyword id="KW-0004">4Fe-4S</keyword>
<keyword id="KW-0007">Acetylation</keyword>
<keyword id="KW-0025">Alternative splicing</keyword>
<keyword id="KW-0225">Disease variant</keyword>
<keyword id="KW-0249">Electron transport</keyword>
<keyword id="KW-0274">FAD</keyword>
<keyword id="KW-0285">Flavoprotein</keyword>
<keyword id="KW-0316">Glutaricaciduria</keyword>
<keyword id="KW-0408">Iron</keyword>
<keyword id="KW-0411">Iron-sulfur</keyword>
<keyword id="KW-0472">Membrane</keyword>
<keyword id="KW-0479">Metal-binding</keyword>
<keyword id="KW-0496">Mitochondrion</keyword>
<keyword id="KW-0999">Mitochondrion inner membrane</keyword>
<keyword id="KW-0560">Oxidoreductase</keyword>
<keyword id="KW-0597">Phosphoprotein</keyword>
<keyword id="KW-1267">Proteomics identification</keyword>
<keyword id="KW-1185">Reference proteome</keyword>
<keyword id="KW-0809">Transit peptide</keyword>
<keyword id="KW-0813">Transport</keyword>
<keyword id="KW-0830">Ubiquinone</keyword>
<organism>
    <name type="scientific">Homo sapiens</name>
    <name type="common">Human</name>
    <dbReference type="NCBI Taxonomy" id="9606"/>
    <lineage>
        <taxon>Eukaryota</taxon>
        <taxon>Metazoa</taxon>
        <taxon>Chordata</taxon>
        <taxon>Craniata</taxon>
        <taxon>Vertebrata</taxon>
        <taxon>Euteleostomi</taxon>
        <taxon>Mammalia</taxon>
        <taxon>Eutheria</taxon>
        <taxon>Euarchontoglires</taxon>
        <taxon>Primates</taxon>
        <taxon>Haplorrhini</taxon>
        <taxon>Catarrhini</taxon>
        <taxon>Hominidae</taxon>
        <taxon>Homo</taxon>
    </lineage>
</organism>